<feature type="chain" id="PRO_0000334399" description="Putative Na(+)/H(+) antiporter NhaA homolog">
    <location>
        <begin position="1"/>
        <end position="286"/>
    </location>
</feature>
<feature type="transmembrane region" description="Helical" evidence="2">
    <location>
        <begin position="21"/>
        <end position="41"/>
    </location>
</feature>
<feature type="transmembrane region" description="Helical" evidence="2">
    <location>
        <begin position="50"/>
        <end position="70"/>
    </location>
</feature>
<feature type="transmembrane region" description="Helical" evidence="2">
    <location>
        <begin position="75"/>
        <end position="95"/>
    </location>
</feature>
<feature type="transmembrane region" description="Helical" evidence="2">
    <location>
        <begin position="101"/>
        <end position="121"/>
    </location>
</feature>
<feature type="transmembrane region" description="Helical" evidence="2">
    <location>
        <begin position="122"/>
        <end position="142"/>
    </location>
</feature>
<feature type="transmembrane region" description="Helical" evidence="2">
    <location>
        <begin position="158"/>
        <end position="178"/>
    </location>
</feature>
<feature type="transmembrane region" description="Helical" evidence="2">
    <location>
        <begin position="186"/>
        <end position="206"/>
    </location>
</feature>
<feature type="transmembrane region" description="Helical" evidence="2">
    <location>
        <begin position="229"/>
        <end position="249"/>
    </location>
</feature>
<feature type="transmembrane region" description="Helical" evidence="2">
    <location>
        <begin position="262"/>
        <end position="282"/>
    </location>
</feature>
<keyword id="KW-0997">Cell inner membrane</keyword>
<keyword id="KW-1003">Cell membrane</keyword>
<keyword id="KW-0472">Membrane</keyword>
<keyword id="KW-0812">Transmembrane</keyword>
<keyword id="KW-1133">Transmembrane helix</keyword>
<protein>
    <recommendedName>
        <fullName>Putative Na(+)/H(+) antiporter NhaA homolog</fullName>
    </recommendedName>
</protein>
<reference key="1">
    <citation type="journal article" date="2005" name="PLoS Biol.">
        <title>The genome sequence of Rickettsia felis identifies the first putative conjugative plasmid in an obligate intracellular parasite.</title>
        <authorList>
            <person name="Ogata H."/>
            <person name="Renesto P."/>
            <person name="Audic S."/>
            <person name="Robert C."/>
            <person name="Blanc G."/>
            <person name="Fournier P.-E."/>
            <person name="Parinello H."/>
            <person name="Claverie J.-M."/>
            <person name="Raoult D."/>
        </authorList>
    </citation>
    <scope>NUCLEOTIDE SEQUENCE [LARGE SCALE GENOMIC DNA]</scope>
    <source>
        <strain>ATCC VR-1525 / URRWXCal2</strain>
    </source>
</reference>
<accession>Q4UJQ7</accession>
<comment type="subcellular location">
    <subcellularLocation>
        <location evidence="1">Cell inner membrane</location>
        <topology evidence="1">Multi-pass membrane protein</topology>
    </subcellularLocation>
</comment>
<comment type="similarity">
    <text evidence="3">Belongs to the NhaA Na(+)/H(+) (TC 2.A.33) antiporter family.</text>
</comment>
<comment type="caution">
    <text evidence="3">Could be the product of a pseudogene. This sequence is shorter than orthologs.</text>
</comment>
<proteinExistence type="uncertain"/>
<organism>
    <name type="scientific">Rickettsia felis (strain ATCC VR-1525 / URRWXCal2)</name>
    <name type="common">Rickettsia azadi</name>
    <dbReference type="NCBI Taxonomy" id="315456"/>
    <lineage>
        <taxon>Bacteria</taxon>
        <taxon>Pseudomonadati</taxon>
        <taxon>Pseudomonadota</taxon>
        <taxon>Alphaproteobacteria</taxon>
        <taxon>Rickettsiales</taxon>
        <taxon>Rickettsiaceae</taxon>
        <taxon>Rickettsieae</taxon>
        <taxon>Rickettsia</taxon>
        <taxon>spotted fever group</taxon>
    </lineage>
</organism>
<dbReference type="EMBL" id="CP000053">
    <property type="protein sequence ID" value="AAY62232.1"/>
    <property type="molecule type" value="Genomic_DNA"/>
</dbReference>
<dbReference type="SMR" id="Q4UJQ7"/>
<dbReference type="STRING" id="315456.RF_1381"/>
<dbReference type="KEGG" id="rfe:RF_1381"/>
<dbReference type="eggNOG" id="COG3004">
    <property type="taxonomic scope" value="Bacteria"/>
</dbReference>
<dbReference type="HOGENOM" id="CLU_015803_1_0_5"/>
<dbReference type="OrthoDB" id="9808135at2"/>
<dbReference type="Proteomes" id="UP000008548">
    <property type="component" value="Chromosome"/>
</dbReference>
<dbReference type="GO" id="GO:0005886">
    <property type="term" value="C:plasma membrane"/>
    <property type="evidence" value="ECO:0007669"/>
    <property type="project" value="UniProtKB-SubCell"/>
</dbReference>
<dbReference type="GO" id="GO:0015385">
    <property type="term" value="F:sodium:proton antiporter activity"/>
    <property type="evidence" value="ECO:0007669"/>
    <property type="project" value="TreeGrafter"/>
</dbReference>
<dbReference type="GO" id="GO:0006885">
    <property type="term" value="P:regulation of pH"/>
    <property type="evidence" value="ECO:0007669"/>
    <property type="project" value="InterPro"/>
</dbReference>
<dbReference type="Gene3D" id="1.20.1530.10">
    <property type="entry name" value="Na+/H+ antiporter like domain"/>
    <property type="match status" value="1"/>
</dbReference>
<dbReference type="InterPro" id="IPR023171">
    <property type="entry name" value="Na/H_antiporter_dom_sf"/>
</dbReference>
<dbReference type="InterPro" id="IPR004670">
    <property type="entry name" value="NhaA"/>
</dbReference>
<dbReference type="NCBIfam" id="TIGR00773">
    <property type="entry name" value="NhaA"/>
    <property type="match status" value="1"/>
</dbReference>
<dbReference type="PANTHER" id="PTHR30341:SF0">
    <property type="entry name" value="NA(+)_H(+) ANTIPORTER NHAA"/>
    <property type="match status" value="1"/>
</dbReference>
<dbReference type="PANTHER" id="PTHR30341">
    <property type="entry name" value="SODIUM ION/PROTON ANTIPORTER NHAA-RELATED"/>
    <property type="match status" value="1"/>
</dbReference>
<dbReference type="Pfam" id="PF06965">
    <property type="entry name" value="Na_H_antiport_1"/>
    <property type="match status" value="1"/>
</dbReference>
<gene>
    <name type="primary">nhaA</name>
    <name type="ordered locus">RF_1381</name>
</gene>
<evidence type="ECO:0000250" key="1"/>
<evidence type="ECO:0000255" key="2"/>
<evidence type="ECO:0000305" key="3"/>
<sequence length="286" mass="31864">MVVPALIYMFFNYDKPGLIKGWAIPIATDTAFVLGILSFFSRHISLELQAFIIGFTLIDDAFALIILALFYTKTINTPALLISSVIIFILFILNYRQVKQLFYYIIVGLLLWISMVESGIHGTLCGAIIALFIPVNIKGEFNTSFKKLENLTRPFVNYFILPLFVFMNSGILLEYFVFKGTCSNSILALVYGIIFGLFVGKQLGIMLFSYPFVKFKLCNLPSDTSWLKFYSISILGGIGFTLSLFIGSITFESSCPSNSMRAAVIIGSLISALFGVAVLKYCTSKE</sequence>
<name>NHAA_RICFE</name>